<accession>Q2FE03</accession>
<proteinExistence type="inferred from homology"/>
<sequence length="1018" mass="111709">MKNNLRYGIRKHKLGAASVFLGTMIVVGMGQDKEAAASEQKTTTVEENGNSATDNKTSETQTTATNVNHIEETQSYNATVTEQPSNATQVTTEEAPKAVQAPQTAQPANIETVKEEVVKEEAKPQVKETTQSQDNSGDQRQVDLTPKKATQNQVAETQVEVAQPRTASESKPRVTRSADVAEAKEASNAKVETGTDVTSKVTVEIGSIEGHNNTNKVEPHAGQRAVLKYKLKFENGLHQGDYFDFTLSNNVNTHGVSTARKVPEIKNGSVVMATGEVLEGGKIRYTFTNDIEDKVDVTAELEINLFIDPKTVQTNGNQTITSTLNEEQTSKELDVKYKDGIGNYYANLNGSIETFNKANNRFSHVAFIKPNNGKTTSVTVTGTLMKGSNQNGNQPKVRIFEYLGNNEDIAKSVYANTTDTSKFKEVTSNMSGNLNLQNNGSYSLNIENLDKTYVVHYDGEYLNGTDEVDFRTQMVGHPEQLYKYYYDRGYTLTWDNGLVLYSNKANGNGKNGPIIQNNKFEYKEDTIKETLTGQYDKNLVTTVEEEYDSSTLDIDYHTAIDGGGGYVDGYIETIEETDSSAIDIDYHTAVDSEAGHVGGYTESSEESNPIDFEESTHENSKHHADVVEYEEDTNPGGGQVTTESNLVEFDEESTKGIVTGAVSDHTTVEDTKEYTTESNLIELVDELPEEHGQAQGPVEEITENNHHISHSGLGTENGHGNYDVIEEIEENSHVDIKSELGYEGGQNSGNQSFEEDTEEDKPKYEQGGNIVDIDFDSVPQIHGQNKGNQSFEEDTEKDKPKYEHGGNIIDIDFDSVPHIHGFNKHTEIIEEDTNKDKPSYQFGGHNSVDFEEDTLPKVSGQNEGQQTIEEDTTPPIVPPTPPTPEVPSEPETPTPPTPEVPSEPETPTPPTPEVPSEPETPTPPTPEVPAEPGKPVPPAKEEPKKPSKPVEQGKVVTPVIEINEKVKAVAPTKKPQSKKSELPETGGEESTNKGMLFGGLFSILGLALLRRNKKNHKA</sequence>
<dbReference type="EMBL" id="CP000255">
    <property type="protein sequence ID" value="ABD21634.1"/>
    <property type="molecule type" value="Genomic_DNA"/>
</dbReference>
<dbReference type="RefSeq" id="WP_000794589.1">
    <property type="nucleotide sequence ID" value="NZ_CP027476.1"/>
</dbReference>
<dbReference type="SMR" id="Q2FE03"/>
<dbReference type="KEGG" id="saa:SAUSA300_2441"/>
<dbReference type="HOGENOM" id="CLU_009849_1_0_9"/>
<dbReference type="OMA" id="THVAYVK"/>
<dbReference type="PRO" id="PR:Q2FE03"/>
<dbReference type="Proteomes" id="UP000001939">
    <property type="component" value="Chromosome"/>
</dbReference>
<dbReference type="GO" id="GO:0005576">
    <property type="term" value="C:extracellular region"/>
    <property type="evidence" value="ECO:0007669"/>
    <property type="project" value="UniProtKB-KW"/>
</dbReference>
<dbReference type="GO" id="GO:0007155">
    <property type="term" value="P:cell adhesion"/>
    <property type="evidence" value="ECO:0007669"/>
    <property type="project" value="UniProtKB-KW"/>
</dbReference>
<dbReference type="FunFam" id="2.60.40.1280:FF:000004">
    <property type="entry name" value="Fibronectin-binding protein A"/>
    <property type="match status" value="1"/>
</dbReference>
<dbReference type="FunFam" id="2.60.40.1290:FF:000002">
    <property type="entry name" value="Fibronectin-binding protein A"/>
    <property type="match status" value="1"/>
</dbReference>
<dbReference type="Gene3D" id="2.60.40.1280">
    <property type="match status" value="1"/>
</dbReference>
<dbReference type="Gene3D" id="2.60.40.1290">
    <property type="match status" value="1"/>
</dbReference>
<dbReference type="InterPro" id="IPR011266">
    <property type="entry name" value="Adhesin_Fg-bd_dom_2"/>
</dbReference>
<dbReference type="InterPro" id="IPR008966">
    <property type="entry name" value="Adhesion_dom_sf"/>
</dbReference>
<dbReference type="InterPro" id="IPR011252">
    <property type="entry name" value="Fibrogen-bd_dom1"/>
</dbReference>
<dbReference type="InterPro" id="IPR004237">
    <property type="entry name" value="Fibron_repeat-bd"/>
</dbReference>
<dbReference type="InterPro" id="IPR019931">
    <property type="entry name" value="LPXTG_anchor"/>
</dbReference>
<dbReference type="InterPro" id="IPR041171">
    <property type="entry name" value="SDR_Ig"/>
</dbReference>
<dbReference type="InterPro" id="IPR005877">
    <property type="entry name" value="YSIRK_signal_dom"/>
</dbReference>
<dbReference type="NCBIfam" id="TIGR01167">
    <property type="entry name" value="LPXTG_anchor"/>
    <property type="match status" value="1"/>
</dbReference>
<dbReference type="NCBIfam" id="TIGR01168">
    <property type="entry name" value="YSIRK_signal"/>
    <property type="match status" value="1"/>
</dbReference>
<dbReference type="PANTHER" id="PTHR24216">
    <property type="entry name" value="PAXILLIN-RELATED"/>
    <property type="match status" value="1"/>
</dbReference>
<dbReference type="Pfam" id="PF17961">
    <property type="entry name" value="Big_8"/>
    <property type="match status" value="1"/>
</dbReference>
<dbReference type="Pfam" id="PF02986">
    <property type="entry name" value="Fn_bind"/>
    <property type="match status" value="3"/>
</dbReference>
<dbReference type="Pfam" id="PF00746">
    <property type="entry name" value="Gram_pos_anchor"/>
    <property type="match status" value="1"/>
</dbReference>
<dbReference type="Pfam" id="PF10425">
    <property type="entry name" value="SdrG_C_C"/>
    <property type="match status" value="1"/>
</dbReference>
<dbReference type="Pfam" id="PF04650">
    <property type="entry name" value="YSIRK_signal"/>
    <property type="match status" value="1"/>
</dbReference>
<dbReference type="SUPFAM" id="SSF49401">
    <property type="entry name" value="Bacterial adhesins"/>
    <property type="match status" value="2"/>
</dbReference>
<dbReference type="PROSITE" id="PS50847">
    <property type="entry name" value="GRAM_POS_ANCHORING"/>
    <property type="match status" value="1"/>
</dbReference>
<feature type="signal peptide" evidence="3">
    <location>
        <begin position="1"/>
        <end position="36"/>
    </location>
</feature>
<feature type="chain" id="PRO_0000313874" description="Fibronectin-binding protein A">
    <location>
        <begin position="37"/>
        <end position="985"/>
    </location>
</feature>
<feature type="propeptide" id="PRO_0000313875" description="Removed by sortase" evidence="4">
    <location>
        <begin position="986"/>
        <end position="1018"/>
    </location>
</feature>
<feature type="repeat" description="B-1">
    <location>
        <begin position="545"/>
        <end position="574"/>
    </location>
</feature>
<feature type="repeat" description="B-2">
    <location>
        <begin position="575"/>
        <end position="604"/>
    </location>
</feature>
<feature type="repeat" description="D-1">
    <location>
        <begin position="745"/>
        <end position="782"/>
    </location>
</feature>
<feature type="repeat" description="D-2">
    <location>
        <begin position="783"/>
        <end position="820"/>
    </location>
</feature>
<feature type="repeat" description="D-3">
    <location>
        <begin position="821"/>
        <end position="859"/>
    </location>
</feature>
<feature type="repeat" description="D-4; truncated">
    <location>
        <begin position="860"/>
        <end position="878"/>
    </location>
</feature>
<feature type="repeat" description="WR 1">
    <location>
        <begin position="879"/>
        <end position="892"/>
    </location>
</feature>
<feature type="repeat" description="WR 2">
    <location>
        <begin position="893"/>
        <end position="906"/>
    </location>
</feature>
<feature type="repeat" description="WR 3">
    <location>
        <begin position="907"/>
        <end position="920"/>
    </location>
</feature>
<feature type="repeat" description="WR 4">
    <location>
        <begin position="921"/>
        <end position="934"/>
    </location>
</feature>
<feature type="repeat" description="WR 5">
    <location>
        <begin position="935"/>
        <end position="948"/>
    </location>
</feature>
<feature type="region of interest" description="Ligand-binding A region">
    <location>
        <begin position="37"/>
        <end position="511"/>
    </location>
</feature>
<feature type="region of interest" description="Disordered" evidence="5">
    <location>
        <begin position="38"/>
        <end position="61"/>
    </location>
</feature>
<feature type="region of interest" description="Disordered" evidence="5">
    <location>
        <begin position="78"/>
        <end position="195"/>
    </location>
</feature>
<feature type="region of interest" description="Fibrinogen/elastin/tropoelastin-binding" evidence="1">
    <location>
        <begin position="194"/>
        <end position="511"/>
    </location>
</feature>
<feature type="region of interest" description="Fibronectin-binding" evidence="1">
    <location>
        <begin position="512"/>
        <end position="872"/>
    </location>
</feature>
<feature type="region of interest" description="2 X approximate tandem repeats">
    <location>
        <begin position="545"/>
        <end position="604"/>
    </location>
</feature>
<feature type="region of interest" description="Disordered" evidence="5">
    <location>
        <begin position="595"/>
        <end position="622"/>
    </location>
</feature>
<feature type="region of interest" description="Disordered" evidence="5">
    <location>
        <begin position="740"/>
        <end position="813"/>
    </location>
</feature>
<feature type="region of interest" description="4 X approximate tandem repeats">
    <location>
        <begin position="745"/>
        <end position="878"/>
    </location>
</feature>
<feature type="region of interest" description="Disordered" evidence="5">
    <location>
        <begin position="827"/>
        <end position="997"/>
    </location>
</feature>
<feature type="region of interest" description="5 X tandem repeats, Pro-rich (WR)">
    <location>
        <begin position="879"/>
        <end position="948"/>
    </location>
</feature>
<feature type="short sequence motif" description="YSIRK-G/S signaling motif" evidence="2">
    <location>
        <begin position="7"/>
        <end position="18"/>
    </location>
</feature>
<feature type="short sequence motif" description="LPXTG sorting signal" evidence="4">
    <location>
        <begin position="982"/>
        <end position="986"/>
    </location>
</feature>
<feature type="compositionally biased region" description="Polar residues" evidence="5">
    <location>
        <begin position="39"/>
        <end position="61"/>
    </location>
</feature>
<feature type="compositionally biased region" description="Polar residues" evidence="5">
    <location>
        <begin position="78"/>
        <end position="92"/>
    </location>
</feature>
<feature type="compositionally biased region" description="Basic and acidic residues" evidence="5">
    <location>
        <begin position="112"/>
        <end position="126"/>
    </location>
</feature>
<feature type="compositionally biased region" description="Polar residues" evidence="5">
    <location>
        <begin position="129"/>
        <end position="139"/>
    </location>
</feature>
<feature type="compositionally biased region" description="Basic and acidic residues" evidence="5">
    <location>
        <begin position="827"/>
        <end position="838"/>
    </location>
</feature>
<feature type="compositionally biased region" description="Pro residues" evidence="5">
    <location>
        <begin position="875"/>
        <end position="938"/>
    </location>
</feature>
<feature type="modified residue" description="Pentaglycyl murein peptidoglycan amidated threonine" evidence="4">
    <location>
        <position position="985"/>
    </location>
</feature>
<comment type="function">
    <text evidence="1">Promotes bacterial attachment to multiple substrates, such as fibronectin (Fn), fibrinogen (Fg), elastin peptides and tropoelastin. This confers to S.aureus the ability to invade endothelial cells. Promotes adherence to and aggregation of activated platelets (By similarity).</text>
</comment>
<comment type="subcellular location">
    <subcellularLocation>
        <location evidence="4">Secreted</location>
        <location evidence="4">Cell wall</location>
        <topology evidence="4">Peptidoglycan-anchor</topology>
    </subcellularLocation>
    <text evidence="2">Anchored to the cell wall by sortase A (By similarity).</text>
</comment>
<comment type="disruption phenotype">
    <text evidence="6">In a double fnbA-fnbB deletion, cells adhere to host (green monkey kidney Vero E6 cells) but cannot invade them.</text>
</comment>
<keyword id="KW-0130">Cell adhesion</keyword>
<keyword id="KW-0134">Cell wall</keyword>
<keyword id="KW-0572">Peptidoglycan-anchor</keyword>
<keyword id="KW-0677">Repeat</keyword>
<keyword id="KW-0964">Secreted</keyword>
<keyword id="KW-0732">Signal</keyword>
<keyword id="KW-0843">Virulence</keyword>
<gene>
    <name evidence="7" type="primary">fnbA</name>
    <name type="ordered locus">SAUSA300_2441</name>
</gene>
<evidence type="ECO:0000250" key="1"/>
<evidence type="ECO:0000250" key="2">
    <source>
        <dbReference type="UniProtKB" id="P14738"/>
    </source>
</evidence>
<evidence type="ECO:0000255" key="3"/>
<evidence type="ECO:0000255" key="4">
    <source>
        <dbReference type="PROSITE-ProRule" id="PRU00477"/>
    </source>
</evidence>
<evidence type="ECO:0000256" key="5">
    <source>
        <dbReference type="SAM" id="MobiDB-lite"/>
    </source>
</evidence>
<evidence type="ECO:0000269" key="6">
    <source>
    </source>
</evidence>
<evidence type="ECO:0000303" key="7">
    <source>
    </source>
</evidence>
<protein>
    <recommendedName>
        <fullName evidence="7">Fibronectin-binding protein A</fullName>
    </recommendedName>
</protein>
<organism>
    <name type="scientific">Staphylococcus aureus (strain USA300)</name>
    <dbReference type="NCBI Taxonomy" id="367830"/>
    <lineage>
        <taxon>Bacteria</taxon>
        <taxon>Bacillati</taxon>
        <taxon>Bacillota</taxon>
        <taxon>Bacilli</taxon>
        <taxon>Bacillales</taxon>
        <taxon>Staphylococcaceae</taxon>
        <taxon>Staphylococcus</taxon>
    </lineage>
</organism>
<name>FNBA_STAA3</name>
<reference key="1">
    <citation type="journal article" date="2006" name="Lancet">
        <title>Complete genome sequence of USA300, an epidemic clone of community-acquired meticillin-resistant Staphylococcus aureus.</title>
        <authorList>
            <person name="Diep B.A."/>
            <person name="Gill S.R."/>
            <person name="Chang R.F."/>
            <person name="Phan T.H."/>
            <person name="Chen J.H."/>
            <person name="Davidson M.G."/>
            <person name="Lin F."/>
            <person name="Lin J."/>
            <person name="Carleton H.A."/>
            <person name="Mongodin E.F."/>
            <person name="Sensabaugh G.F."/>
            <person name="Perdreau-Remington F."/>
        </authorList>
    </citation>
    <scope>NUCLEOTIDE SEQUENCE [LARGE SCALE GENOMIC DNA]</scope>
    <source>
        <strain>USA300</strain>
    </source>
</reference>
<reference key="2">
    <citation type="journal article" date="2023" name="IScience">
        <title>The Staphylococcus aureus protein IsdA increases SARS CoV-2 replication by modulating JAK-STAT signaling.</title>
        <authorList>
            <person name="Goncheva M.I."/>
            <person name="Gibson R.M."/>
            <person name="Shouldice A.C."/>
            <person name="Dikeakos J.D."/>
            <person name="Heinrichs D.E."/>
        </authorList>
    </citation>
    <scope>DISRUPTION PHENOTYPE</scope>
    <scope>VIRULENCE</scope>
    <source>
        <strain>USA300 / LAC</strain>
    </source>
</reference>